<proteinExistence type="inferred from homology"/>
<comment type="function">
    <text evidence="1">Fluoride-specific ion channel. Important for reducing fluoride concentration in the cell, thus reducing its toxicity.</text>
</comment>
<comment type="catalytic activity">
    <reaction evidence="1">
        <text>fluoride(in) = fluoride(out)</text>
        <dbReference type="Rhea" id="RHEA:76159"/>
        <dbReference type="ChEBI" id="CHEBI:17051"/>
    </reaction>
    <physiologicalReaction direction="left-to-right" evidence="1">
        <dbReference type="Rhea" id="RHEA:76160"/>
    </physiologicalReaction>
</comment>
<comment type="activity regulation">
    <text evidence="1">Na(+) is not transported, but it plays an essential structural role and its presence is essential for fluoride channel function.</text>
</comment>
<comment type="subcellular location">
    <subcellularLocation>
        <location evidence="1">Cell inner membrane</location>
        <topology evidence="1">Multi-pass membrane protein</topology>
    </subcellularLocation>
</comment>
<comment type="similarity">
    <text evidence="1">Belongs to the fluoride channel Fluc/FEX (TC 1.A.43) family.</text>
</comment>
<organism>
    <name type="scientific">Brucella suis biovar 1 (strain 1330)</name>
    <dbReference type="NCBI Taxonomy" id="204722"/>
    <lineage>
        <taxon>Bacteria</taxon>
        <taxon>Pseudomonadati</taxon>
        <taxon>Pseudomonadota</taxon>
        <taxon>Alphaproteobacteria</taxon>
        <taxon>Hyphomicrobiales</taxon>
        <taxon>Brucellaceae</taxon>
        <taxon>Brucella/Ochrobactrum group</taxon>
        <taxon>Brucella</taxon>
    </lineage>
</organism>
<feature type="chain" id="PRO_0000110078" description="Fluoride-specific ion channel FluC 4">
    <location>
        <begin position="1"/>
        <end position="137"/>
    </location>
</feature>
<feature type="transmembrane region" description="Helical" evidence="1">
    <location>
        <begin position="20"/>
        <end position="40"/>
    </location>
</feature>
<feature type="transmembrane region" description="Helical" evidence="1">
    <location>
        <begin position="43"/>
        <end position="63"/>
    </location>
</feature>
<feature type="transmembrane region" description="Helical" evidence="1">
    <location>
        <begin position="83"/>
        <end position="103"/>
    </location>
</feature>
<feature type="transmembrane region" description="Helical" evidence="1">
    <location>
        <begin position="110"/>
        <end position="130"/>
    </location>
</feature>
<feature type="binding site" evidence="1">
    <location>
        <position position="86"/>
    </location>
    <ligand>
        <name>Na(+)</name>
        <dbReference type="ChEBI" id="CHEBI:29101"/>
        <note>structural</note>
    </ligand>
</feature>
<feature type="binding site" evidence="1">
    <location>
        <position position="89"/>
    </location>
    <ligand>
        <name>Na(+)</name>
        <dbReference type="ChEBI" id="CHEBI:29101"/>
        <note>structural</note>
    </ligand>
</feature>
<name>FLUC4_BRUSU</name>
<protein>
    <recommendedName>
        <fullName evidence="1">Fluoride-specific ion channel FluC 4</fullName>
    </recommendedName>
</protein>
<dbReference type="EMBL" id="AE014292">
    <property type="protein sequence ID" value="AAN33993.1"/>
    <property type="molecule type" value="Genomic_DNA"/>
</dbReference>
<dbReference type="EMBL" id="CP002998">
    <property type="protein sequence ID" value="AEM20269.1"/>
    <property type="molecule type" value="Genomic_DNA"/>
</dbReference>
<dbReference type="SMR" id="Q8FVL9"/>
<dbReference type="KEGG" id="bms:BRA0818"/>
<dbReference type="KEGG" id="bsi:BS1330_II0811"/>
<dbReference type="PATRIC" id="fig|204722.21.peg.3549"/>
<dbReference type="HOGENOM" id="CLU_114342_3_0_5"/>
<dbReference type="Proteomes" id="UP000007104">
    <property type="component" value="Chromosome II"/>
</dbReference>
<dbReference type="GO" id="GO:0005886">
    <property type="term" value="C:plasma membrane"/>
    <property type="evidence" value="ECO:0007669"/>
    <property type="project" value="UniProtKB-SubCell"/>
</dbReference>
<dbReference type="GO" id="GO:0062054">
    <property type="term" value="F:fluoride channel activity"/>
    <property type="evidence" value="ECO:0007669"/>
    <property type="project" value="UniProtKB-UniRule"/>
</dbReference>
<dbReference type="GO" id="GO:0046872">
    <property type="term" value="F:metal ion binding"/>
    <property type="evidence" value="ECO:0007669"/>
    <property type="project" value="UniProtKB-KW"/>
</dbReference>
<dbReference type="GO" id="GO:0140114">
    <property type="term" value="P:cellular detoxification of fluoride"/>
    <property type="evidence" value="ECO:0007669"/>
    <property type="project" value="UniProtKB-UniRule"/>
</dbReference>
<dbReference type="HAMAP" id="MF_00454">
    <property type="entry name" value="FluC"/>
    <property type="match status" value="1"/>
</dbReference>
<dbReference type="InterPro" id="IPR003691">
    <property type="entry name" value="FluC"/>
</dbReference>
<dbReference type="NCBIfam" id="NF010821">
    <property type="entry name" value="PRK14225.1"/>
    <property type="match status" value="1"/>
</dbReference>
<dbReference type="Pfam" id="PF02537">
    <property type="entry name" value="CRCB"/>
    <property type="match status" value="1"/>
</dbReference>
<reference key="1">
    <citation type="journal article" date="2002" name="Proc. Natl. Acad. Sci. U.S.A.">
        <title>The Brucella suis genome reveals fundamental similarities between animal and plant pathogens and symbionts.</title>
        <authorList>
            <person name="Paulsen I.T."/>
            <person name="Seshadri R."/>
            <person name="Nelson K.E."/>
            <person name="Eisen J.A."/>
            <person name="Heidelberg J.F."/>
            <person name="Read T.D."/>
            <person name="Dodson R.J."/>
            <person name="Umayam L.A."/>
            <person name="Brinkac L.M."/>
            <person name="Beanan M.J."/>
            <person name="Daugherty S.C."/>
            <person name="DeBoy R.T."/>
            <person name="Durkin A.S."/>
            <person name="Kolonay J.F."/>
            <person name="Madupu R."/>
            <person name="Nelson W.C."/>
            <person name="Ayodeji B."/>
            <person name="Kraul M."/>
            <person name="Shetty J."/>
            <person name="Malek J.A."/>
            <person name="Van Aken S.E."/>
            <person name="Riedmuller S."/>
            <person name="Tettelin H."/>
            <person name="Gill S.R."/>
            <person name="White O."/>
            <person name="Salzberg S.L."/>
            <person name="Hoover D.L."/>
            <person name="Lindler L.E."/>
            <person name="Halling S.M."/>
            <person name="Boyle S.M."/>
            <person name="Fraser C.M."/>
        </authorList>
    </citation>
    <scope>NUCLEOTIDE SEQUENCE [LARGE SCALE GENOMIC DNA]</scope>
    <source>
        <strain>1330</strain>
    </source>
</reference>
<reference key="2">
    <citation type="journal article" date="2011" name="J. Bacteriol.">
        <title>Revised genome sequence of Brucella suis 1330.</title>
        <authorList>
            <person name="Tae H."/>
            <person name="Shallom S."/>
            <person name="Settlage R."/>
            <person name="Preston D."/>
            <person name="Adams L.G."/>
            <person name="Garner H.R."/>
        </authorList>
    </citation>
    <scope>NUCLEOTIDE SEQUENCE [LARGE SCALE GENOMIC DNA]</scope>
    <source>
        <strain>1330</strain>
    </source>
</reference>
<sequence length="137" mass="14745">MRNWRQAENIRLYIAVGCGAAIGALLRFLSGWVIVAILGANPLWGTSFVNIVGSFIIMFFATLTGPEGRWLVSPAWRQFVMGGLCGGLTTFSSMSLDTFLLVLHGNAAFALAYLCGLVFLSLSAAMLGLIAAQRINR</sequence>
<evidence type="ECO:0000255" key="1">
    <source>
        <dbReference type="HAMAP-Rule" id="MF_00454"/>
    </source>
</evidence>
<keyword id="KW-0997">Cell inner membrane</keyword>
<keyword id="KW-1003">Cell membrane</keyword>
<keyword id="KW-0407">Ion channel</keyword>
<keyword id="KW-0406">Ion transport</keyword>
<keyword id="KW-0472">Membrane</keyword>
<keyword id="KW-0479">Metal-binding</keyword>
<keyword id="KW-0915">Sodium</keyword>
<keyword id="KW-0812">Transmembrane</keyword>
<keyword id="KW-1133">Transmembrane helix</keyword>
<keyword id="KW-0813">Transport</keyword>
<accession>Q8FVL9</accession>
<accession>G0KDI1</accession>
<gene>
    <name evidence="1" type="primary">fluC4</name>
    <name evidence="1" type="synonym">crcB4</name>
    <name type="ordered locus">BRA0818</name>
    <name type="ordered locus">BS1330_II0811</name>
</gene>